<dbReference type="EC" id="4.6.1.17" evidence="1"/>
<dbReference type="EMBL" id="CP000247">
    <property type="protein sequence ID" value="ABG68816.1"/>
    <property type="molecule type" value="Genomic_DNA"/>
</dbReference>
<dbReference type="RefSeq" id="WP_000080885.1">
    <property type="nucleotide sequence ID" value="NC_008253.1"/>
</dbReference>
<dbReference type="SMR" id="Q0TJR5"/>
<dbReference type="GeneID" id="86945666"/>
<dbReference type="KEGG" id="ecp:ECP_0797"/>
<dbReference type="HOGENOM" id="CLU_074693_1_1_6"/>
<dbReference type="UniPathway" id="UPA00344"/>
<dbReference type="Proteomes" id="UP000009182">
    <property type="component" value="Chromosome"/>
</dbReference>
<dbReference type="GO" id="GO:0061799">
    <property type="term" value="F:cyclic pyranopterin monophosphate synthase activity"/>
    <property type="evidence" value="ECO:0007669"/>
    <property type="project" value="UniProtKB-UniRule"/>
</dbReference>
<dbReference type="GO" id="GO:0006777">
    <property type="term" value="P:Mo-molybdopterin cofactor biosynthetic process"/>
    <property type="evidence" value="ECO:0007669"/>
    <property type="project" value="UniProtKB-UniRule"/>
</dbReference>
<dbReference type="CDD" id="cd01420">
    <property type="entry name" value="MoaC_PE"/>
    <property type="match status" value="1"/>
</dbReference>
<dbReference type="FunFam" id="3.30.70.640:FF:000001">
    <property type="entry name" value="Cyclic pyranopterin monophosphate synthase"/>
    <property type="match status" value="1"/>
</dbReference>
<dbReference type="Gene3D" id="3.30.70.640">
    <property type="entry name" value="Molybdopterin cofactor biosynthesis C (MoaC) domain"/>
    <property type="match status" value="1"/>
</dbReference>
<dbReference type="HAMAP" id="MF_01224_B">
    <property type="entry name" value="MoaC_B"/>
    <property type="match status" value="1"/>
</dbReference>
<dbReference type="InterPro" id="IPR023045">
    <property type="entry name" value="MoaC"/>
</dbReference>
<dbReference type="InterPro" id="IPR047594">
    <property type="entry name" value="MoaC_bact/euk"/>
</dbReference>
<dbReference type="InterPro" id="IPR036522">
    <property type="entry name" value="MoaC_sf"/>
</dbReference>
<dbReference type="InterPro" id="IPR050105">
    <property type="entry name" value="MoCo_biosynth_MoaA/MoaC"/>
</dbReference>
<dbReference type="InterPro" id="IPR002820">
    <property type="entry name" value="Mopterin_CF_biosynth-C_dom"/>
</dbReference>
<dbReference type="NCBIfam" id="TIGR00581">
    <property type="entry name" value="moaC"/>
    <property type="match status" value="1"/>
</dbReference>
<dbReference type="NCBIfam" id="NF006870">
    <property type="entry name" value="PRK09364.1"/>
    <property type="match status" value="1"/>
</dbReference>
<dbReference type="PANTHER" id="PTHR22960">
    <property type="entry name" value="MOLYBDOPTERIN COFACTOR SYNTHESIS PROTEIN A"/>
    <property type="match status" value="1"/>
</dbReference>
<dbReference type="Pfam" id="PF01967">
    <property type="entry name" value="MoaC"/>
    <property type="match status" value="1"/>
</dbReference>
<dbReference type="SUPFAM" id="SSF55040">
    <property type="entry name" value="Molybdenum cofactor biosynthesis protein C, MoaC"/>
    <property type="match status" value="1"/>
</dbReference>
<accession>Q0TJR5</accession>
<protein>
    <recommendedName>
        <fullName evidence="1">Cyclic pyranopterin monophosphate synthase</fullName>
        <ecNumber evidence="1">4.6.1.17</ecNumber>
    </recommendedName>
    <alternativeName>
        <fullName evidence="1">Molybdenum cofactor biosynthesis protein C</fullName>
    </alternativeName>
</protein>
<comment type="function">
    <text evidence="1">Catalyzes the conversion of (8S)-3',8-cyclo-7,8-dihydroguanosine 5'-triphosphate to cyclic pyranopterin monophosphate (cPMP).</text>
</comment>
<comment type="catalytic activity">
    <reaction evidence="1">
        <text>(8S)-3',8-cyclo-7,8-dihydroguanosine 5'-triphosphate = cyclic pyranopterin phosphate + diphosphate</text>
        <dbReference type="Rhea" id="RHEA:49580"/>
        <dbReference type="ChEBI" id="CHEBI:33019"/>
        <dbReference type="ChEBI" id="CHEBI:59648"/>
        <dbReference type="ChEBI" id="CHEBI:131766"/>
        <dbReference type="EC" id="4.6.1.17"/>
    </reaction>
</comment>
<comment type="pathway">
    <text evidence="1">Cofactor biosynthesis; molybdopterin biosynthesis.</text>
</comment>
<comment type="subunit">
    <text evidence="1">Homohexamer; trimer of dimers.</text>
</comment>
<comment type="similarity">
    <text evidence="1">Belongs to the MoaC family.</text>
</comment>
<name>MOAC_ECOL5</name>
<keyword id="KW-0456">Lyase</keyword>
<keyword id="KW-0501">Molybdenum cofactor biosynthesis</keyword>
<feature type="chain" id="PRO_1000054092" description="Cyclic pyranopterin monophosphate synthase">
    <location>
        <begin position="1"/>
        <end position="161"/>
    </location>
</feature>
<feature type="active site" evidence="1">
    <location>
        <position position="128"/>
    </location>
</feature>
<feature type="binding site" evidence="1">
    <location>
        <begin position="75"/>
        <end position="77"/>
    </location>
    <ligand>
        <name>substrate</name>
    </ligand>
</feature>
<feature type="binding site" evidence="1">
    <location>
        <begin position="113"/>
        <end position="114"/>
    </location>
    <ligand>
        <name>substrate</name>
    </ligand>
</feature>
<reference key="1">
    <citation type="journal article" date="2006" name="Mol. Microbiol.">
        <title>Role of pathogenicity island-associated integrases in the genome plasticity of uropathogenic Escherichia coli strain 536.</title>
        <authorList>
            <person name="Hochhut B."/>
            <person name="Wilde C."/>
            <person name="Balling G."/>
            <person name="Middendorf B."/>
            <person name="Dobrindt U."/>
            <person name="Brzuszkiewicz E."/>
            <person name="Gottschalk G."/>
            <person name="Carniel E."/>
            <person name="Hacker J."/>
        </authorList>
    </citation>
    <scope>NUCLEOTIDE SEQUENCE [LARGE SCALE GENOMIC DNA]</scope>
    <source>
        <strain>536 / UPEC</strain>
    </source>
</reference>
<organism>
    <name type="scientific">Escherichia coli O6:K15:H31 (strain 536 / UPEC)</name>
    <dbReference type="NCBI Taxonomy" id="362663"/>
    <lineage>
        <taxon>Bacteria</taxon>
        <taxon>Pseudomonadati</taxon>
        <taxon>Pseudomonadota</taxon>
        <taxon>Gammaproteobacteria</taxon>
        <taxon>Enterobacterales</taxon>
        <taxon>Enterobacteriaceae</taxon>
        <taxon>Escherichia</taxon>
    </lineage>
</organism>
<gene>
    <name evidence="1" type="primary">moaC</name>
    <name type="ordered locus">ECP_0797</name>
</gene>
<proteinExistence type="inferred from homology"/>
<evidence type="ECO:0000255" key="1">
    <source>
        <dbReference type="HAMAP-Rule" id="MF_01224"/>
    </source>
</evidence>
<sequence>MSQLTHINAAGEAHMVDVSAKAETVREARAEAFVTMRSETLAMIIDGRHHKGDVFATARIAGIQAAKRTWDLIPLCHPLMLSKVEVNLQAEPEHNRVRIETLCRLTGKTGVEMEALTAASVAALTIYDMCKAVQKDMVIGPVRLLAKSGGKSGDFKVEADD</sequence>